<protein>
    <recommendedName>
        <fullName>Protein kil</fullName>
    </recommendedName>
</protein>
<reference key="1">
    <citation type="journal article" date="1982" name="J. Mol. Biol.">
        <title>Nucleotide sequence of bacteriophage lambda DNA.</title>
        <authorList>
            <person name="Sanger F."/>
            <person name="Coulson A.R."/>
            <person name="Hong G.F."/>
            <person name="Hill D.F."/>
            <person name="Petersen G.B."/>
        </authorList>
    </citation>
    <scope>NUCLEOTIDE SEQUENCE [LARGE SCALE GENOMIC DNA]</scope>
</reference>
<reference key="2">
    <citation type="journal article" date="1981" name="Nucleic Acids Res.">
        <title>The DNA sequence of the phage lambda genome between PL and the gene bet.</title>
        <authorList>
            <person name="Ineichen K."/>
            <person name="Shepherd J.C.W."/>
            <person name="Bickle T.A."/>
        </authorList>
    </citation>
    <scope>NUCLEOTIDE SEQUENCE [GENOMIC DNA]</scope>
</reference>
<keyword id="KW-1185">Reference proteome</keyword>
<evidence type="ECO:0000305" key="1"/>
<sequence length="89" mass="10066">MPLQGGLLLAALPNLYLNESPVNYVTDGNALSTYLISQESQRMDQTLMAIQTKFTIATFIGDEKMFREAVDAYKKWILILKLRSSKSIH</sequence>
<proteinExistence type="inferred from homology"/>
<organismHost>
    <name type="scientific">Escherichia coli</name>
    <dbReference type="NCBI Taxonomy" id="562"/>
</organismHost>
<dbReference type="EMBL" id="V00638">
    <property type="protein sequence ID" value="CAA23979.1"/>
    <property type="molecule type" value="Genomic_DNA"/>
</dbReference>
<dbReference type="EMBL" id="J02459">
    <property type="protein sequence ID" value="AAA96572.1"/>
    <property type="molecule type" value="Genomic_DNA"/>
</dbReference>
<dbReference type="PIR" id="C43010">
    <property type="entry name" value="VDBPL"/>
</dbReference>
<dbReference type="RefSeq" id="NP_040619.1">
    <property type="nucleotide sequence ID" value="NC_001416.1"/>
</dbReference>
<dbReference type="IntAct" id="P03758">
    <property type="interactions" value="1"/>
</dbReference>
<dbReference type="KEGG" id="vg:3827057"/>
<dbReference type="Proteomes" id="UP000001711">
    <property type="component" value="Genome"/>
</dbReference>
<dbReference type="InterPro" id="IPR010444">
    <property type="entry name" value="Phage_lambda_Kil"/>
</dbReference>
<dbReference type="Pfam" id="PF06301">
    <property type="entry name" value="Lambda_Kil"/>
    <property type="match status" value="1"/>
</dbReference>
<name>VKIL_LAMBD</name>
<accession>P03758</accession>
<gene>
    <name type="primary">kil</name>
</gene>
<feature type="chain" id="PRO_0000003369" description="Protein kil">
    <location>
        <begin position="1"/>
        <end position="89"/>
    </location>
</feature>
<comment type="function">
    <text>Gene kil kills the host upon prophage induction.</text>
</comment>
<comment type="similarity">
    <text evidence="1">Belongs to the lambda phage kil family.</text>
</comment>
<comment type="caution">
    <text evidence="1">PubMed:6458018 authors have assigned the sequence shown to regulatory protein CIII. See the entry for the gam gene protein for their assignment of the kil gene protein.</text>
</comment>
<organism>
    <name type="scientific">Escherichia phage lambda</name>
    <name type="common">Bacteriophage lambda</name>
    <dbReference type="NCBI Taxonomy" id="2681611"/>
    <lineage>
        <taxon>Viruses</taxon>
        <taxon>Duplodnaviria</taxon>
        <taxon>Heunggongvirae</taxon>
        <taxon>Uroviricota</taxon>
        <taxon>Caudoviricetes</taxon>
        <taxon>Lambdavirus</taxon>
        <taxon>Lambdavirus lambda</taxon>
    </lineage>
</organism>